<comment type="function">
    <text evidence="1">Binds to the 23S rRNA.</text>
</comment>
<comment type="similarity">
    <text evidence="1">Belongs to the bacterial ribosomal protein bL9 family.</text>
</comment>
<dbReference type="EMBL" id="CP000538">
    <property type="protein sequence ID" value="EAQ72319.1"/>
    <property type="molecule type" value="Genomic_DNA"/>
</dbReference>
<dbReference type="RefSeq" id="WP_002854980.1">
    <property type="nucleotide sequence ID" value="NC_008787.1"/>
</dbReference>
<dbReference type="SMR" id="A1VZ23"/>
<dbReference type="KEGG" id="cjj:CJJ81176_0691"/>
<dbReference type="eggNOG" id="COG0359">
    <property type="taxonomic scope" value="Bacteria"/>
</dbReference>
<dbReference type="HOGENOM" id="CLU_078938_3_0_7"/>
<dbReference type="Proteomes" id="UP000000646">
    <property type="component" value="Chromosome"/>
</dbReference>
<dbReference type="GO" id="GO:1990904">
    <property type="term" value="C:ribonucleoprotein complex"/>
    <property type="evidence" value="ECO:0007669"/>
    <property type="project" value="UniProtKB-KW"/>
</dbReference>
<dbReference type="GO" id="GO:0005840">
    <property type="term" value="C:ribosome"/>
    <property type="evidence" value="ECO:0007669"/>
    <property type="project" value="UniProtKB-KW"/>
</dbReference>
<dbReference type="GO" id="GO:0019843">
    <property type="term" value="F:rRNA binding"/>
    <property type="evidence" value="ECO:0007669"/>
    <property type="project" value="UniProtKB-UniRule"/>
</dbReference>
<dbReference type="GO" id="GO:0003735">
    <property type="term" value="F:structural constituent of ribosome"/>
    <property type="evidence" value="ECO:0007669"/>
    <property type="project" value="InterPro"/>
</dbReference>
<dbReference type="GO" id="GO:0006412">
    <property type="term" value="P:translation"/>
    <property type="evidence" value="ECO:0007669"/>
    <property type="project" value="UniProtKB-UniRule"/>
</dbReference>
<dbReference type="FunFam" id="3.40.5.10:FF:000002">
    <property type="entry name" value="50S ribosomal protein L9"/>
    <property type="match status" value="1"/>
</dbReference>
<dbReference type="Gene3D" id="3.10.430.100">
    <property type="entry name" value="Ribosomal protein L9, C-terminal domain"/>
    <property type="match status" value="1"/>
</dbReference>
<dbReference type="Gene3D" id="3.40.5.10">
    <property type="entry name" value="Ribosomal protein L9, N-terminal domain"/>
    <property type="match status" value="1"/>
</dbReference>
<dbReference type="HAMAP" id="MF_00503">
    <property type="entry name" value="Ribosomal_bL9"/>
    <property type="match status" value="1"/>
</dbReference>
<dbReference type="InterPro" id="IPR000244">
    <property type="entry name" value="Ribosomal_bL9"/>
</dbReference>
<dbReference type="InterPro" id="IPR009027">
    <property type="entry name" value="Ribosomal_bL9/RNase_H1_N"/>
</dbReference>
<dbReference type="InterPro" id="IPR020594">
    <property type="entry name" value="Ribosomal_bL9_bac/chp"/>
</dbReference>
<dbReference type="InterPro" id="IPR020069">
    <property type="entry name" value="Ribosomal_bL9_C"/>
</dbReference>
<dbReference type="InterPro" id="IPR036791">
    <property type="entry name" value="Ribosomal_bL9_C_sf"/>
</dbReference>
<dbReference type="InterPro" id="IPR020070">
    <property type="entry name" value="Ribosomal_bL9_N"/>
</dbReference>
<dbReference type="InterPro" id="IPR036935">
    <property type="entry name" value="Ribosomal_bL9_N_sf"/>
</dbReference>
<dbReference type="NCBIfam" id="TIGR00158">
    <property type="entry name" value="L9"/>
    <property type="match status" value="1"/>
</dbReference>
<dbReference type="PANTHER" id="PTHR21368">
    <property type="entry name" value="50S RIBOSOMAL PROTEIN L9"/>
    <property type="match status" value="1"/>
</dbReference>
<dbReference type="Pfam" id="PF03948">
    <property type="entry name" value="Ribosomal_L9_C"/>
    <property type="match status" value="1"/>
</dbReference>
<dbReference type="Pfam" id="PF01281">
    <property type="entry name" value="Ribosomal_L9_N"/>
    <property type="match status" value="1"/>
</dbReference>
<dbReference type="SUPFAM" id="SSF55658">
    <property type="entry name" value="L9 N-domain-like"/>
    <property type="match status" value="1"/>
</dbReference>
<dbReference type="SUPFAM" id="SSF55653">
    <property type="entry name" value="Ribosomal protein L9 C-domain"/>
    <property type="match status" value="1"/>
</dbReference>
<dbReference type="PROSITE" id="PS00651">
    <property type="entry name" value="RIBOSOMAL_L9"/>
    <property type="match status" value="1"/>
</dbReference>
<organism>
    <name type="scientific">Campylobacter jejuni subsp. jejuni serotype O:23/36 (strain 81-176)</name>
    <dbReference type="NCBI Taxonomy" id="354242"/>
    <lineage>
        <taxon>Bacteria</taxon>
        <taxon>Pseudomonadati</taxon>
        <taxon>Campylobacterota</taxon>
        <taxon>Epsilonproteobacteria</taxon>
        <taxon>Campylobacterales</taxon>
        <taxon>Campylobacteraceae</taxon>
        <taxon>Campylobacter</taxon>
    </lineage>
</organism>
<keyword id="KW-0687">Ribonucleoprotein</keyword>
<keyword id="KW-0689">Ribosomal protein</keyword>
<keyword id="KW-0694">RNA-binding</keyword>
<keyword id="KW-0699">rRNA-binding</keyword>
<feature type="chain" id="PRO_1000014763" description="Large ribosomal subunit protein bL9">
    <location>
        <begin position="1"/>
        <end position="147"/>
    </location>
</feature>
<gene>
    <name evidence="1" type="primary">rplI</name>
    <name type="ordered locus">CJJ81176_0691</name>
</gene>
<accession>A1VZ23</accession>
<proteinExistence type="inferred from homology"/>
<sequence>MKVLLIKDVKALGKAGEVKEVKDGYGQNFLIAKGFAKAATNEVLKKYESDKKKEAENLRFEIANLEKLKEELSKITLEISKPVGANGSLFGGVTKDEIAHALKEQSHIEIDKKSLECDTFKSLGLHEVSVKLGHAIHAKFNINIKAE</sequence>
<name>RL9_CAMJJ</name>
<protein>
    <recommendedName>
        <fullName evidence="1">Large ribosomal subunit protein bL9</fullName>
    </recommendedName>
    <alternativeName>
        <fullName evidence="2">50S ribosomal protein L9</fullName>
    </alternativeName>
</protein>
<evidence type="ECO:0000255" key="1">
    <source>
        <dbReference type="HAMAP-Rule" id="MF_00503"/>
    </source>
</evidence>
<evidence type="ECO:0000305" key="2"/>
<reference key="1">
    <citation type="submission" date="2006-12" db="EMBL/GenBank/DDBJ databases">
        <authorList>
            <person name="Fouts D.E."/>
            <person name="Nelson K.E."/>
            <person name="Sebastian Y."/>
        </authorList>
    </citation>
    <scope>NUCLEOTIDE SEQUENCE [LARGE SCALE GENOMIC DNA]</scope>
    <source>
        <strain>81-176</strain>
    </source>
</reference>